<keyword id="KW-0067">ATP-binding</keyword>
<keyword id="KW-1048">Host nucleus</keyword>
<keyword id="KW-0418">Kinase</keyword>
<keyword id="KW-0547">Nucleotide-binding</keyword>
<keyword id="KW-1185">Reference proteome</keyword>
<keyword id="KW-0723">Serine/threonine-protein kinase</keyword>
<keyword id="KW-0808">Transferase</keyword>
<keyword id="KW-0946">Virion</keyword>
<keyword id="KW-0920">Virion tegument</keyword>
<accession>P09296</accession>
<proteinExistence type="evidence at protein level"/>
<protein>
    <recommendedName>
        <fullName>Serine/threonine-protein kinase UL13 homolog</fullName>
    </recommendedName>
    <alternativeName>
        <fullName>Protein kinase ORF47</fullName>
        <ecNumber>2.7.11.1</ecNumber>
    </alternativeName>
</protein>
<gene>
    <name type="ORF">ORF47</name>
</gene>
<comment type="function">
    <text evidence="1 5 6">Multifunctional serine/threonine kinase that plays a role in several processes including egress of virus particles from the nucleus, modulation of the actin cytoskeleton and regulation of viral and cellular gene expression. Regulates the nuclear localization of viral envelopment factor proteins 24 and 27, by phosphorylating the protein kinase ORF66, indicating a role in nuclear egress. Disrupts host nuclear lamins, including LMNA and LMNB1. Phosphorylates the viral Fc receptor composed of glycoproteins E (gE) and I (gI) (By similarity). Phosphorylation of glycoprotein E (gE) by UL13 alters its subcellular localization, from the host early endosome to the plasma membrane. Participates in the transcriptional regulation of cellular and viral mRNAs mainly by phosphorylating the viral transcriptional regulator IE63.</text>
</comment>
<comment type="catalytic activity">
    <reaction>
        <text>L-seryl-[protein] + ATP = O-phospho-L-seryl-[protein] + ADP + H(+)</text>
        <dbReference type="Rhea" id="RHEA:17989"/>
        <dbReference type="Rhea" id="RHEA-COMP:9863"/>
        <dbReference type="Rhea" id="RHEA-COMP:11604"/>
        <dbReference type="ChEBI" id="CHEBI:15378"/>
        <dbReference type="ChEBI" id="CHEBI:29999"/>
        <dbReference type="ChEBI" id="CHEBI:30616"/>
        <dbReference type="ChEBI" id="CHEBI:83421"/>
        <dbReference type="ChEBI" id="CHEBI:456216"/>
        <dbReference type="EC" id="2.7.11.1"/>
    </reaction>
</comment>
<comment type="catalytic activity">
    <reaction>
        <text>L-threonyl-[protein] + ATP = O-phospho-L-threonyl-[protein] + ADP + H(+)</text>
        <dbReference type="Rhea" id="RHEA:46608"/>
        <dbReference type="Rhea" id="RHEA-COMP:11060"/>
        <dbReference type="Rhea" id="RHEA-COMP:11605"/>
        <dbReference type="ChEBI" id="CHEBI:15378"/>
        <dbReference type="ChEBI" id="CHEBI:30013"/>
        <dbReference type="ChEBI" id="CHEBI:30616"/>
        <dbReference type="ChEBI" id="CHEBI:61977"/>
        <dbReference type="ChEBI" id="CHEBI:456216"/>
        <dbReference type="EC" id="2.7.11.1"/>
    </reaction>
</comment>
<comment type="subcellular location">
    <subcellularLocation>
        <location evidence="1">Virion tegument</location>
    </subcellularLocation>
    <subcellularLocation>
        <location evidence="1">Host nucleus</location>
    </subcellularLocation>
</comment>
<comment type="PTM">
    <text evidence="1">Autophosphorylated.</text>
</comment>
<comment type="miscellaneous">
    <text>Displays a substrate specificity similar to host CDC2.</text>
</comment>
<comment type="similarity">
    <text evidence="2">Belongs to the protein kinase superfamily. Ser/Thr protein kinase family.</text>
</comment>
<organism>
    <name type="scientific">Varicella-zoster virus (strain Dumas)</name>
    <name type="common">HHV-3</name>
    <name type="synonym">Human herpesvirus 3</name>
    <dbReference type="NCBI Taxonomy" id="10338"/>
    <lineage>
        <taxon>Viruses</taxon>
        <taxon>Duplodnaviria</taxon>
        <taxon>Heunggongvirae</taxon>
        <taxon>Peploviricota</taxon>
        <taxon>Herviviricetes</taxon>
        <taxon>Herpesvirales</taxon>
        <taxon>Orthoherpesviridae</taxon>
        <taxon>Alphaherpesvirinae</taxon>
        <taxon>Varicellovirus</taxon>
        <taxon>Varicellovirus humanalpha3</taxon>
        <taxon>Human herpesvirus 3</taxon>
    </lineage>
</organism>
<reference key="1">
    <citation type="journal article" date="1986" name="J. Gen. Virol.">
        <title>The complete DNA sequence of varicella-zoster virus.</title>
        <authorList>
            <person name="Davison A.J."/>
            <person name="Scott J.E."/>
        </authorList>
    </citation>
    <scope>NUCLEOTIDE SEQUENCE [LARGE SCALE GENOMIC DNA]</scope>
</reference>
<reference key="2">
    <citation type="journal article" date="1989" name="J. Virol.">
        <title>Identification of new protein kinase-related genes in three herpesviruses, herpes simplex virus, varicella-zoster virus, and Epstein-Barr virus.</title>
        <authorList>
            <person name="Smith R.F."/>
            <person name="Smith T.F."/>
        </authorList>
    </citation>
    <scope>FUNCTION IN PHOSPHORYLATION OF ORF62 AND ORF63</scope>
    <source>
        <strain>VZV-32</strain>
    </source>
</reference>
<reference key="3">
    <citation type="journal article" date="2001" name="J. Virol.">
        <title>Varicella-zoster virus ORF47 protein serine kinase: characterization of a cloned, biologically active phosphotransferase and two viral substrates, ORF62 and ORF63.</title>
        <authorList>
            <person name="Kenyon T.K."/>
            <person name="Lynch J.M."/>
            <person name="Hay J."/>
            <person name="Ruyechan W.T."/>
            <person name="Grose C."/>
        </authorList>
    </citation>
    <scope>FUNCTION</scope>
</reference>
<sequence length="510" mass="57351">MDADDTPPNLQISPTAGPLRSHHNTDGHEPNATAADQQERESTNPTHGCVNHPWANPSTATCMESPERSQQTSLFLLKHGLTRDPIHQRERVDVFPQFNKPPWVFRISKLSRLIVPIFTLNEQLCFSKLQIRDRPRFAGRGTYGRVHIYPSSKIAVKTMDSRVFNRELINAILASEGSIRAGERLGISSIVCLLGFSLQTKQLLFPAYDMDMDEYIVRLSRRLTIPDHIDRKIAHVFLDLAQALTFLNRTCGLTHLDVKCGNIFLNVDNFASLEITTAVIGDYSLVTLNTYSLCTRAIFEVGNPSHPEHVLRVPRDASQMSFRLVLSHGTNQPPEILLDYINGTGLTKYTGTLPQRVGLAIDLYALGQALLEVILLGRLPGQLPISVHRTPHYHYYGHKLSPDLALDTLAYRCVLAPYILPSDIPGDLNYNPFIHAGELNTRISRNSLRRIFQCHAVRYGVTHSKLFEGIRIPASLYPATVVTSLLCHDNSEIRSDHPLLWHDRDWIGST</sequence>
<name>UL13_VZVD</name>
<feature type="chain" id="PRO_0000086189" description="Serine/threonine-protein kinase UL13 homolog">
    <location>
        <begin position="1"/>
        <end position="510"/>
    </location>
</feature>
<feature type="domain" description="Protein kinase" evidence="2">
    <location>
        <begin position="132"/>
        <end position="458"/>
    </location>
</feature>
<feature type="region of interest" description="Disordered" evidence="4">
    <location>
        <begin position="1"/>
        <end position="63"/>
    </location>
</feature>
<feature type="active site" description="Proton acceptor" evidence="2 3">
    <location>
        <position position="257"/>
    </location>
</feature>
<feature type="binding site" evidence="2">
    <location>
        <begin position="138"/>
        <end position="146"/>
    </location>
    <ligand>
        <name>ATP</name>
        <dbReference type="ChEBI" id="CHEBI:30616"/>
    </ligand>
</feature>
<feature type="binding site" evidence="2">
    <location>
        <position position="157"/>
    </location>
    <ligand>
        <name>ATP</name>
        <dbReference type="ChEBI" id="CHEBI:30616"/>
    </ligand>
</feature>
<organismHost>
    <name type="scientific">Homo sapiens</name>
    <name type="common">Human</name>
    <dbReference type="NCBI Taxonomy" id="9606"/>
</organismHost>
<evidence type="ECO:0000250" key="1"/>
<evidence type="ECO:0000255" key="2">
    <source>
        <dbReference type="PROSITE-ProRule" id="PRU00159"/>
    </source>
</evidence>
<evidence type="ECO:0000255" key="3">
    <source>
        <dbReference type="PROSITE-ProRule" id="PRU10027"/>
    </source>
</evidence>
<evidence type="ECO:0000256" key="4">
    <source>
        <dbReference type="SAM" id="MobiDB-lite"/>
    </source>
</evidence>
<evidence type="ECO:0000269" key="5">
    <source>
    </source>
</evidence>
<evidence type="ECO:0000269" key="6">
    <source>
    </source>
</evidence>
<dbReference type="EC" id="2.7.11.1"/>
<dbReference type="EMBL" id="X04370">
    <property type="protein sequence ID" value="CAA27930.1"/>
    <property type="molecule type" value="Genomic_DNA"/>
</dbReference>
<dbReference type="PIR" id="C27344">
    <property type="entry name" value="WZBE47"/>
</dbReference>
<dbReference type="Proteomes" id="UP000002602">
    <property type="component" value="Genome"/>
</dbReference>
<dbReference type="GO" id="GO:0042025">
    <property type="term" value="C:host cell nucleus"/>
    <property type="evidence" value="ECO:0007669"/>
    <property type="project" value="UniProtKB-SubCell"/>
</dbReference>
<dbReference type="GO" id="GO:0019033">
    <property type="term" value="C:viral tegument"/>
    <property type="evidence" value="ECO:0007669"/>
    <property type="project" value="UniProtKB-SubCell"/>
</dbReference>
<dbReference type="GO" id="GO:0005524">
    <property type="term" value="F:ATP binding"/>
    <property type="evidence" value="ECO:0007669"/>
    <property type="project" value="UniProtKB-KW"/>
</dbReference>
<dbReference type="GO" id="GO:0106310">
    <property type="term" value="F:protein serine kinase activity"/>
    <property type="evidence" value="ECO:0007669"/>
    <property type="project" value="RHEA"/>
</dbReference>
<dbReference type="GO" id="GO:0004674">
    <property type="term" value="F:protein serine/threonine kinase activity"/>
    <property type="evidence" value="ECO:0007669"/>
    <property type="project" value="UniProtKB-KW"/>
</dbReference>
<dbReference type="Gene3D" id="1.10.510.10">
    <property type="entry name" value="Transferase(Phosphotransferase) domain 1"/>
    <property type="match status" value="1"/>
</dbReference>
<dbReference type="InterPro" id="IPR011009">
    <property type="entry name" value="Kinase-like_dom_sf"/>
</dbReference>
<dbReference type="InterPro" id="IPR000719">
    <property type="entry name" value="Prot_kinase_dom"/>
</dbReference>
<dbReference type="InterPro" id="IPR008271">
    <property type="entry name" value="Ser/Thr_kinase_AS"/>
</dbReference>
<dbReference type="SMART" id="SM00220">
    <property type="entry name" value="S_TKc"/>
    <property type="match status" value="1"/>
</dbReference>
<dbReference type="SUPFAM" id="SSF56112">
    <property type="entry name" value="Protein kinase-like (PK-like)"/>
    <property type="match status" value="1"/>
</dbReference>
<dbReference type="PROSITE" id="PS50011">
    <property type="entry name" value="PROTEIN_KINASE_DOM"/>
    <property type="match status" value="1"/>
</dbReference>
<dbReference type="PROSITE" id="PS00108">
    <property type="entry name" value="PROTEIN_KINASE_ST"/>
    <property type="match status" value="1"/>
</dbReference>